<dbReference type="EMBL" id="CP000323">
    <property type="protein sequence ID" value="ABE74770.1"/>
    <property type="status" value="ALT_INIT"/>
    <property type="molecule type" value="Genomic_DNA"/>
</dbReference>
<dbReference type="RefSeq" id="WP_041753046.1">
    <property type="nucleotide sequence ID" value="NC_007969.1"/>
</dbReference>
<dbReference type="SMR" id="Q1QC33"/>
<dbReference type="STRING" id="335284.Pcryo_0989"/>
<dbReference type="KEGG" id="pcr:Pcryo_0989"/>
<dbReference type="eggNOG" id="COG0829">
    <property type="taxonomic scope" value="Bacteria"/>
</dbReference>
<dbReference type="HOGENOM" id="CLU_056339_0_0_6"/>
<dbReference type="Proteomes" id="UP000002425">
    <property type="component" value="Chromosome"/>
</dbReference>
<dbReference type="GO" id="GO:0005737">
    <property type="term" value="C:cytoplasm"/>
    <property type="evidence" value="ECO:0007669"/>
    <property type="project" value="UniProtKB-SubCell"/>
</dbReference>
<dbReference type="GO" id="GO:0016151">
    <property type="term" value="F:nickel cation binding"/>
    <property type="evidence" value="ECO:0007669"/>
    <property type="project" value="UniProtKB-UniRule"/>
</dbReference>
<dbReference type="HAMAP" id="MF_01384">
    <property type="entry name" value="UreD"/>
    <property type="match status" value="1"/>
</dbReference>
<dbReference type="InterPro" id="IPR002669">
    <property type="entry name" value="UreD"/>
</dbReference>
<dbReference type="PANTHER" id="PTHR33643">
    <property type="entry name" value="UREASE ACCESSORY PROTEIN D"/>
    <property type="match status" value="1"/>
</dbReference>
<dbReference type="PANTHER" id="PTHR33643:SF1">
    <property type="entry name" value="UREASE ACCESSORY PROTEIN D"/>
    <property type="match status" value="1"/>
</dbReference>
<dbReference type="Pfam" id="PF01774">
    <property type="entry name" value="UreD"/>
    <property type="match status" value="1"/>
</dbReference>
<reference key="1">
    <citation type="submission" date="2006-03" db="EMBL/GenBank/DDBJ databases">
        <title>Complete sequence of chromosome of Psychrobacter cryohalolentis K5.</title>
        <authorList>
            <consortium name="US DOE Joint Genome Institute"/>
            <person name="Copeland A."/>
            <person name="Lucas S."/>
            <person name="Lapidus A."/>
            <person name="Barry K."/>
            <person name="Detter J.C."/>
            <person name="Glavina T."/>
            <person name="Hammon N."/>
            <person name="Israni S."/>
            <person name="Dalin E."/>
            <person name="Tice H."/>
            <person name="Pitluck S."/>
            <person name="Brettin T."/>
            <person name="Bruce D."/>
            <person name="Han C."/>
            <person name="Tapia R."/>
            <person name="Sims D.R."/>
            <person name="Gilna P."/>
            <person name="Schmutz J."/>
            <person name="Larimer F."/>
            <person name="Land M."/>
            <person name="Hauser L."/>
            <person name="Kyrpides N."/>
            <person name="Kim E."/>
            <person name="Richardson P."/>
        </authorList>
    </citation>
    <scope>NUCLEOTIDE SEQUENCE [LARGE SCALE GENOMIC DNA]</scope>
    <source>
        <strain>ATCC BAA-1226 / DSM 17306 / VKM B-2378 / K5</strain>
    </source>
</reference>
<name>URED2_PSYCK</name>
<proteinExistence type="inferred from homology"/>
<protein>
    <recommendedName>
        <fullName evidence="1">Urease accessory protein UreD 2</fullName>
    </recommendedName>
</protein>
<organism>
    <name type="scientific">Psychrobacter cryohalolentis (strain ATCC BAA-1226 / DSM 17306 / VKM B-2378 / K5)</name>
    <dbReference type="NCBI Taxonomy" id="335284"/>
    <lineage>
        <taxon>Bacteria</taxon>
        <taxon>Pseudomonadati</taxon>
        <taxon>Pseudomonadota</taxon>
        <taxon>Gammaproteobacteria</taxon>
        <taxon>Moraxellales</taxon>
        <taxon>Moraxellaceae</taxon>
        <taxon>Psychrobacter</taxon>
    </lineage>
</organism>
<feature type="chain" id="PRO_0000340497" description="Urease accessory protein UreD 2">
    <location>
        <begin position="1"/>
        <end position="329"/>
    </location>
</feature>
<feature type="region of interest" description="Disordered" evidence="2">
    <location>
        <begin position="100"/>
        <end position="120"/>
    </location>
</feature>
<feature type="compositionally biased region" description="Polar residues" evidence="2">
    <location>
        <begin position="103"/>
        <end position="120"/>
    </location>
</feature>
<keyword id="KW-0143">Chaperone</keyword>
<keyword id="KW-0963">Cytoplasm</keyword>
<keyword id="KW-0996">Nickel insertion</keyword>
<evidence type="ECO:0000255" key="1">
    <source>
        <dbReference type="HAMAP-Rule" id="MF_01384"/>
    </source>
</evidence>
<evidence type="ECO:0000256" key="2">
    <source>
        <dbReference type="SAM" id="MobiDB-lite"/>
    </source>
</evidence>
<evidence type="ECO:0000305" key="3"/>
<gene>
    <name evidence="1" type="primary">ureD2</name>
    <name type="ordered locus">Pcryo_0989</name>
</gene>
<accession>Q1QC33</accession>
<sequence>MTWQSSLQLHFDCASNAAKTRLYHRAHTGALMVQRALYPEPDSTDSSQAGICHIYVLYPPAGIADDDRLTLEFDLHSNSHAVITTPGAGKWYGQRKSLRYSRPSDSSKFTNGTQSANSNTSNDCFNDVVSAEQHIDARLDDHAVLEWLPQESIYYDHSVSTANNRFYLAKTASLLTWDIAVFGRQAYQETFANGHYANRLEIWRESDLLVSECTAQQANTRWFTSPLGLNDQHVHGSFWAIPSTEVIAPELQNNPLKLGQYLDATITEIRNLIDTQSLPIHCTHNFQGINCRYLGADVRACFEAFYQIRELIRSKWYKLEPHRPRIWDT</sequence>
<comment type="function">
    <text evidence="1">Required for maturation of urease via the functional incorporation of the urease nickel metallocenter.</text>
</comment>
<comment type="subunit">
    <text evidence="1">UreD, UreF and UreG form a complex that acts as a GTP-hydrolysis-dependent molecular chaperone, activating the urease apoprotein by helping to assemble the nickel containing metallocenter of UreC. The UreE protein probably delivers the nickel.</text>
</comment>
<comment type="subcellular location">
    <subcellularLocation>
        <location evidence="1">Cytoplasm</location>
    </subcellularLocation>
</comment>
<comment type="similarity">
    <text evidence="1">Belongs to the UreD family.</text>
</comment>
<comment type="sequence caution" evidence="3">
    <conflict type="erroneous initiation">
        <sequence resource="EMBL-CDS" id="ABE74770"/>
    </conflict>
</comment>